<protein>
    <recommendedName>
        <fullName evidence="1">Peptide chain release factor 2</fullName>
        <shortName evidence="1">RF-2</shortName>
    </recommendedName>
</protein>
<comment type="function">
    <text evidence="1">Peptide chain release factor 2 directs the termination of translation in response to the peptide chain termination codons UGA and UAA.</text>
</comment>
<comment type="subcellular location">
    <subcellularLocation>
        <location evidence="1">Cytoplasm</location>
    </subcellularLocation>
</comment>
<comment type="PTM">
    <text evidence="1">Methylated by PrmC. Methylation increases the termination efficiency of RF2.</text>
</comment>
<comment type="similarity">
    <text evidence="1">Belongs to the prokaryotic/mitochondrial release factor family.</text>
</comment>
<name>RF2_JANMA</name>
<gene>
    <name evidence="1" type="primary">prfB</name>
    <name type="ordered locus">mma_1261</name>
</gene>
<feature type="chain" id="PRO_1000004991" description="Peptide chain release factor 2">
    <location>
        <begin position="1"/>
        <end position="367"/>
    </location>
</feature>
<feature type="modified residue" description="N5-methylglutamine" evidence="1">
    <location>
        <position position="254"/>
    </location>
</feature>
<accession>A6SXF4</accession>
<sequence>MEAERLNSLESLLADLTTRATELRRYLDFDVKSEKLDQVNGELEDPDVWNDQKRAQDLGKEKKSLEAIVHTLIKIDSELNDARDLFEMAREEKDEDTIVAIENDAQELLKLVEGMEFRRMFSNPMDANNCFIDIQAGAGGTEAQDWASMLLRQYLRYCERKGFKVEILEQSDGEVAGIKTATLKVEGDYAYGFLRTETGVHRLVRKSPFDSANGRHTSFSSLFVYPEVDDSIEIDINPADVRIDTYRASGAGGQHINKTDSAVRLTHGPSGIVVQCQNDRSQHRNKAEAWDMLKAKLFELEMRNRMSEQQKLEDSKTDVGWGHQIRSYVLDQSRIKDLRTNFETGNTKAVLDGDLDDFIAASLKQGV</sequence>
<organism>
    <name type="scientific">Janthinobacterium sp. (strain Marseille)</name>
    <name type="common">Minibacterium massiliensis</name>
    <dbReference type="NCBI Taxonomy" id="375286"/>
    <lineage>
        <taxon>Bacteria</taxon>
        <taxon>Pseudomonadati</taxon>
        <taxon>Pseudomonadota</taxon>
        <taxon>Betaproteobacteria</taxon>
        <taxon>Burkholderiales</taxon>
        <taxon>Oxalobacteraceae</taxon>
        <taxon>Janthinobacterium</taxon>
    </lineage>
</organism>
<dbReference type="EMBL" id="CP000269">
    <property type="protein sequence ID" value="ABR88973.1"/>
    <property type="molecule type" value="Genomic_DNA"/>
</dbReference>
<dbReference type="RefSeq" id="WP_012079118.1">
    <property type="nucleotide sequence ID" value="NC_009659.1"/>
</dbReference>
<dbReference type="SMR" id="A6SXF4"/>
<dbReference type="STRING" id="375286.mma_1261"/>
<dbReference type="KEGG" id="mms:mma_1261"/>
<dbReference type="eggNOG" id="COG1186">
    <property type="taxonomic scope" value="Bacteria"/>
</dbReference>
<dbReference type="HOGENOM" id="CLU_220733_0_0_4"/>
<dbReference type="OrthoDB" id="9806673at2"/>
<dbReference type="Proteomes" id="UP000006388">
    <property type="component" value="Chromosome"/>
</dbReference>
<dbReference type="GO" id="GO:0005737">
    <property type="term" value="C:cytoplasm"/>
    <property type="evidence" value="ECO:0007669"/>
    <property type="project" value="UniProtKB-SubCell"/>
</dbReference>
<dbReference type="GO" id="GO:0016149">
    <property type="term" value="F:translation release factor activity, codon specific"/>
    <property type="evidence" value="ECO:0007669"/>
    <property type="project" value="UniProtKB-UniRule"/>
</dbReference>
<dbReference type="FunFam" id="3.30.160.20:FF:000010">
    <property type="entry name" value="Peptide chain release factor 2"/>
    <property type="match status" value="1"/>
</dbReference>
<dbReference type="Gene3D" id="3.30.160.20">
    <property type="match status" value="1"/>
</dbReference>
<dbReference type="Gene3D" id="3.30.70.1660">
    <property type="match status" value="1"/>
</dbReference>
<dbReference type="Gene3D" id="1.20.58.410">
    <property type="entry name" value="Release factor"/>
    <property type="match status" value="1"/>
</dbReference>
<dbReference type="HAMAP" id="MF_00094">
    <property type="entry name" value="Rel_fac_2"/>
    <property type="match status" value="1"/>
</dbReference>
<dbReference type="InterPro" id="IPR005139">
    <property type="entry name" value="PCRF"/>
</dbReference>
<dbReference type="InterPro" id="IPR000352">
    <property type="entry name" value="Pep_chain_release_fac_I"/>
</dbReference>
<dbReference type="InterPro" id="IPR045853">
    <property type="entry name" value="Pep_chain_release_fac_I_sf"/>
</dbReference>
<dbReference type="InterPro" id="IPR004374">
    <property type="entry name" value="PrfB"/>
</dbReference>
<dbReference type="NCBIfam" id="TIGR00020">
    <property type="entry name" value="prfB"/>
    <property type="match status" value="1"/>
</dbReference>
<dbReference type="PANTHER" id="PTHR43116:SF3">
    <property type="entry name" value="CLASS I PEPTIDE CHAIN RELEASE FACTOR"/>
    <property type="match status" value="1"/>
</dbReference>
<dbReference type="PANTHER" id="PTHR43116">
    <property type="entry name" value="PEPTIDE CHAIN RELEASE FACTOR 2"/>
    <property type="match status" value="1"/>
</dbReference>
<dbReference type="Pfam" id="PF03462">
    <property type="entry name" value="PCRF"/>
    <property type="match status" value="1"/>
</dbReference>
<dbReference type="Pfam" id="PF00472">
    <property type="entry name" value="RF-1"/>
    <property type="match status" value="1"/>
</dbReference>
<dbReference type="SMART" id="SM00937">
    <property type="entry name" value="PCRF"/>
    <property type="match status" value="1"/>
</dbReference>
<dbReference type="SUPFAM" id="SSF75620">
    <property type="entry name" value="Release factor"/>
    <property type="match status" value="1"/>
</dbReference>
<dbReference type="PROSITE" id="PS00745">
    <property type="entry name" value="RF_PROK_I"/>
    <property type="match status" value="1"/>
</dbReference>
<keyword id="KW-0963">Cytoplasm</keyword>
<keyword id="KW-0488">Methylation</keyword>
<keyword id="KW-0648">Protein biosynthesis</keyword>
<evidence type="ECO:0000255" key="1">
    <source>
        <dbReference type="HAMAP-Rule" id="MF_00094"/>
    </source>
</evidence>
<reference key="1">
    <citation type="journal article" date="2007" name="PLoS Genet.">
        <title>Genome analysis of Minibacterium massiliensis highlights the convergent evolution of water-living bacteria.</title>
        <authorList>
            <person name="Audic S."/>
            <person name="Robert C."/>
            <person name="Campagna B."/>
            <person name="Parinello H."/>
            <person name="Claverie J.-M."/>
            <person name="Raoult D."/>
            <person name="Drancourt M."/>
        </authorList>
    </citation>
    <scope>NUCLEOTIDE SEQUENCE [LARGE SCALE GENOMIC DNA]</scope>
    <source>
        <strain>Marseille</strain>
    </source>
</reference>
<proteinExistence type="inferred from homology"/>